<feature type="chain" id="PRO_1000002338" description="Small ribosomal subunit protein eS8">
    <location>
        <begin position="1"/>
        <end position="130"/>
    </location>
</feature>
<comment type="subunit">
    <text evidence="1">Part of the 30S ribosomal subunit.</text>
</comment>
<comment type="similarity">
    <text evidence="1">Belongs to the eukaryotic ribosomal protein eS8 family.</text>
</comment>
<accession>A8AAJ7</accession>
<keyword id="KW-1185">Reference proteome</keyword>
<keyword id="KW-0687">Ribonucleoprotein</keyword>
<keyword id="KW-0689">Ribosomal protein</keyword>
<evidence type="ECO:0000255" key="1">
    <source>
        <dbReference type="HAMAP-Rule" id="MF_00029"/>
    </source>
</evidence>
<evidence type="ECO:0000305" key="2"/>
<protein>
    <recommendedName>
        <fullName evidence="1">Small ribosomal subunit protein eS8</fullName>
    </recommendedName>
    <alternativeName>
        <fullName evidence="2">30S ribosomal protein S8e</fullName>
    </alternativeName>
</protein>
<organism>
    <name type="scientific">Ignicoccus hospitalis (strain KIN4/I / DSM 18386 / JCM 14125)</name>
    <dbReference type="NCBI Taxonomy" id="453591"/>
    <lineage>
        <taxon>Archaea</taxon>
        <taxon>Thermoproteota</taxon>
        <taxon>Thermoprotei</taxon>
        <taxon>Desulfurococcales</taxon>
        <taxon>Desulfurococcaceae</taxon>
        <taxon>Ignicoccus</taxon>
    </lineage>
</organism>
<reference key="1">
    <citation type="journal article" date="2008" name="Genome Biol.">
        <title>A genomic analysis of the archaeal system Ignicoccus hospitalis-Nanoarchaeum equitans.</title>
        <authorList>
            <person name="Podar M."/>
            <person name="Anderson I."/>
            <person name="Makarova K.S."/>
            <person name="Elkins J.G."/>
            <person name="Ivanova N."/>
            <person name="Wall M.A."/>
            <person name="Lykidis A."/>
            <person name="Mavromatis K."/>
            <person name="Sun H."/>
            <person name="Hudson M.E."/>
            <person name="Chen W."/>
            <person name="Deciu C."/>
            <person name="Hutchison D."/>
            <person name="Eads J.R."/>
            <person name="Anderson A."/>
            <person name="Fernandes F."/>
            <person name="Szeto E."/>
            <person name="Lapidus A."/>
            <person name="Kyrpides N.C."/>
            <person name="Saier M.H. Jr."/>
            <person name="Richardson P.M."/>
            <person name="Rachel R."/>
            <person name="Huber H."/>
            <person name="Eisen J.A."/>
            <person name="Koonin E.V."/>
            <person name="Keller M."/>
            <person name="Stetter K.O."/>
        </authorList>
    </citation>
    <scope>NUCLEOTIDE SEQUENCE [LARGE SCALE GENOMIC DNA]</scope>
    <source>
        <strain>KIN4/I / DSM 18386 / JCM 14125</strain>
    </source>
</reference>
<sequence>MGVYHGPDLKKITGGKKRRHRKVKRKYWMGRYPTNTTLAENEKRKIERVRGGNIKVRLRYAAYANVVDPNENVAKKVKILRVLETPANKELARHGIIVKGTKIETELGVAVVTSRPGQDGVINAVLIERK</sequence>
<proteinExistence type="inferred from homology"/>
<name>RS8E_IGNH4</name>
<gene>
    <name evidence="1" type="primary">rps8e</name>
    <name type="ordered locus">Igni_0767</name>
</gene>
<dbReference type="EMBL" id="CP000816">
    <property type="protein sequence ID" value="ABU81949.1"/>
    <property type="molecule type" value="Genomic_DNA"/>
</dbReference>
<dbReference type="RefSeq" id="WP_012122913.1">
    <property type="nucleotide sequence ID" value="NC_009776.1"/>
</dbReference>
<dbReference type="SMR" id="A8AAJ7"/>
<dbReference type="STRING" id="453591.Igni_0767"/>
<dbReference type="GeneID" id="5561766"/>
<dbReference type="KEGG" id="iho:Igni_0767"/>
<dbReference type="eggNOG" id="arCOG04154">
    <property type="taxonomic scope" value="Archaea"/>
</dbReference>
<dbReference type="HOGENOM" id="CLU_080597_2_1_2"/>
<dbReference type="OrthoDB" id="372305at2157"/>
<dbReference type="PhylomeDB" id="A8AAJ7"/>
<dbReference type="Proteomes" id="UP000000262">
    <property type="component" value="Chromosome"/>
</dbReference>
<dbReference type="GO" id="GO:1990904">
    <property type="term" value="C:ribonucleoprotein complex"/>
    <property type="evidence" value="ECO:0007669"/>
    <property type="project" value="UniProtKB-KW"/>
</dbReference>
<dbReference type="GO" id="GO:0005840">
    <property type="term" value="C:ribosome"/>
    <property type="evidence" value="ECO:0007669"/>
    <property type="project" value="UniProtKB-KW"/>
</dbReference>
<dbReference type="GO" id="GO:0003735">
    <property type="term" value="F:structural constituent of ribosome"/>
    <property type="evidence" value="ECO:0007669"/>
    <property type="project" value="InterPro"/>
</dbReference>
<dbReference type="GO" id="GO:0006412">
    <property type="term" value="P:translation"/>
    <property type="evidence" value="ECO:0007669"/>
    <property type="project" value="UniProtKB-UniRule"/>
</dbReference>
<dbReference type="CDD" id="cd11382">
    <property type="entry name" value="Ribosomal_S8e"/>
    <property type="match status" value="1"/>
</dbReference>
<dbReference type="FunFam" id="2.40.10.310:FF:000002">
    <property type="entry name" value="30S ribosomal protein S8e"/>
    <property type="match status" value="1"/>
</dbReference>
<dbReference type="Gene3D" id="2.40.10.310">
    <property type="match status" value="1"/>
</dbReference>
<dbReference type="HAMAP" id="MF_00029">
    <property type="entry name" value="Ribosomal_eS8"/>
    <property type="match status" value="1"/>
</dbReference>
<dbReference type="InterPro" id="IPR001047">
    <property type="entry name" value="Ribosomal_eS8"/>
</dbReference>
<dbReference type="InterPro" id="IPR020919">
    <property type="entry name" value="Ribosomal_protein_eS8_arc"/>
</dbReference>
<dbReference type="InterPro" id="IPR022309">
    <property type="entry name" value="Ribosomal_Se8/biogenesis_NSA2"/>
</dbReference>
<dbReference type="NCBIfam" id="TIGR00307">
    <property type="entry name" value="eS8"/>
    <property type="match status" value="1"/>
</dbReference>
<dbReference type="PANTHER" id="PTHR10394">
    <property type="entry name" value="40S RIBOSOMAL PROTEIN S8"/>
    <property type="match status" value="1"/>
</dbReference>
<dbReference type="Pfam" id="PF01201">
    <property type="entry name" value="Ribosomal_S8e"/>
    <property type="match status" value="1"/>
</dbReference>